<sequence length="245" mass="26384">METVNNSVQSEKSRRRVLLKLSGEVFGGGKLGVDPDTVRGVAKQIAAAVPDVEVAIVVGGGNFFRGAELSQSGMDRSRADYMGMLGTVMNCLALQDFLEQAGVETRVQSAITMGQVAEAYIPRRAIRHMEKGRVVIFGAGAGLPYFSTDTVAAQRALEVHADVVLMAKSGVDGVYTADPKKDPEAEKLDHLSYDEALRRDIRVMDQTAMTMCKDNNLTMVVFGMEGEGNVTRAIRGEQLGTVVTP</sequence>
<reference key="1">
    <citation type="journal article" date="2013" name="Stand. Genomic Sci.">
        <title>Complete genome sequence of Arthrobacter sp. strain FB24.</title>
        <authorList>
            <person name="Nakatsu C.H."/>
            <person name="Barabote R."/>
            <person name="Thompson S."/>
            <person name="Bruce D."/>
            <person name="Detter C."/>
            <person name="Brettin T."/>
            <person name="Han C."/>
            <person name="Beasley F."/>
            <person name="Chen W."/>
            <person name="Konopka A."/>
            <person name="Xie G."/>
        </authorList>
    </citation>
    <scope>NUCLEOTIDE SEQUENCE [LARGE SCALE GENOMIC DNA]</scope>
    <source>
        <strain>FB24</strain>
    </source>
</reference>
<protein>
    <recommendedName>
        <fullName evidence="1">Uridylate kinase</fullName>
        <shortName evidence="1">UK</shortName>
        <ecNumber evidence="1">2.7.4.22</ecNumber>
    </recommendedName>
    <alternativeName>
        <fullName evidence="1">Uridine monophosphate kinase</fullName>
        <shortName evidence="1">UMP kinase</shortName>
        <shortName evidence="1">UMPK</shortName>
    </alternativeName>
</protein>
<accession>A0JUP3</accession>
<feature type="chain" id="PRO_0000323786" description="Uridylate kinase">
    <location>
        <begin position="1"/>
        <end position="245"/>
    </location>
</feature>
<feature type="binding site" evidence="1">
    <location>
        <begin position="20"/>
        <end position="23"/>
    </location>
    <ligand>
        <name>ATP</name>
        <dbReference type="ChEBI" id="CHEBI:30616"/>
    </ligand>
</feature>
<feature type="binding site" evidence="1">
    <location>
        <position position="60"/>
    </location>
    <ligand>
        <name>UMP</name>
        <dbReference type="ChEBI" id="CHEBI:57865"/>
    </ligand>
</feature>
<feature type="binding site" evidence="1">
    <location>
        <position position="61"/>
    </location>
    <ligand>
        <name>ATP</name>
        <dbReference type="ChEBI" id="CHEBI:30616"/>
    </ligand>
</feature>
<feature type="binding site" evidence="1">
    <location>
        <position position="65"/>
    </location>
    <ligand>
        <name>ATP</name>
        <dbReference type="ChEBI" id="CHEBI:30616"/>
    </ligand>
</feature>
<feature type="binding site" evidence="1">
    <location>
        <position position="80"/>
    </location>
    <ligand>
        <name>UMP</name>
        <dbReference type="ChEBI" id="CHEBI:57865"/>
    </ligand>
</feature>
<feature type="binding site" evidence="1">
    <location>
        <begin position="141"/>
        <end position="148"/>
    </location>
    <ligand>
        <name>UMP</name>
        <dbReference type="ChEBI" id="CHEBI:57865"/>
    </ligand>
</feature>
<feature type="binding site" evidence="1">
    <location>
        <position position="175"/>
    </location>
    <ligand>
        <name>ATP</name>
        <dbReference type="ChEBI" id="CHEBI:30616"/>
    </ligand>
</feature>
<feature type="binding site" evidence="1">
    <location>
        <position position="178"/>
    </location>
    <ligand>
        <name>ATP</name>
        <dbReference type="ChEBI" id="CHEBI:30616"/>
    </ligand>
</feature>
<gene>
    <name evidence="1" type="primary">pyrH</name>
    <name type="ordered locus">Arth_1369</name>
</gene>
<organism>
    <name type="scientific">Arthrobacter sp. (strain FB24)</name>
    <dbReference type="NCBI Taxonomy" id="290399"/>
    <lineage>
        <taxon>Bacteria</taxon>
        <taxon>Bacillati</taxon>
        <taxon>Actinomycetota</taxon>
        <taxon>Actinomycetes</taxon>
        <taxon>Micrococcales</taxon>
        <taxon>Micrococcaceae</taxon>
        <taxon>Arthrobacter</taxon>
    </lineage>
</organism>
<evidence type="ECO:0000255" key="1">
    <source>
        <dbReference type="HAMAP-Rule" id="MF_01220"/>
    </source>
</evidence>
<comment type="function">
    <text evidence="1">Catalyzes the reversible phosphorylation of UMP to UDP.</text>
</comment>
<comment type="catalytic activity">
    <reaction evidence="1">
        <text>UMP + ATP = UDP + ADP</text>
        <dbReference type="Rhea" id="RHEA:24400"/>
        <dbReference type="ChEBI" id="CHEBI:30616"/>
        <dbReference type="ChEBI" id="CHEBI:57865"/>
        <dbReference type="ChEBI" id="CHEBI:58223"/>
        <dbReference type="ChEBI" id="CHEBI:456216"/>
        <dbReference type="EC" id="2.7.4.22"/>
    </reaction>
</comment>
<comment type="activity regulation">
    <text evidence="1">Inhibited by UTP.</text>
</comment>
<comment type="pathway">
    <text evidence="1">Pyrimidine metabolism; CTP biosynthesis via de novo pathway; UDP from UMP (UMPK route): step 1/1.</text>
</comment>
<comment type="subunit">
    <text evidence="1">Homohexamer.</text>
</comment>
<comment type="subcellular location">
    <subcellularLocation>
        <location evidence="1">Cytoplasm</location>
    </subcellularLocation>
</comment>
<comment type="similarity">
    <text evidence="1">Belongs to the UMP kinase family.</text>
</comment>
<keyword id="KW-0067">ATP-binding</keyword>
<keyword id="KW-0963">Cytoplasm</keyword>
<keyword id="KW-0418">Kinase</keyword>
<keyword id="KW-0547">Nucleotide-binding</keyword>
<keyword id="KW-0665">Pyrimidine biosynthesis</keyword>
<keyword id="KW-1185">Reference proteome</keyword>
<keyword id="KW-0808">Transferase</keyword>
<name>PYRH_ARTS2</name>
<dbReference type="EC" id="2.7.4.22" evidence="1"/>
<dbReference type="EMBL" id="CP000454">
    <property type="protein sequence ID" value="ABK02763.1"/>
    <property type="molecule type" value="Genomic_DNA"/>
</dbReference>
<dbReference type="RefSeq" id="WP_011691230.1">
    <property type="nucleotide sequence ID" value="NC_008541.1"/>
</dbReference>
<dbReference type="SMR" id="A0JUP3"/>
<dbReference type="STRING" id="290399.Arth_1369"/>
<dbReference type="KEGG" id="art:Arth_1369"/>
<dbReference type="eggNOG" id="COG0528">
    <property type="taxonomic scope" value="Bacteria"/>
</dbReference>
<dbReference type="HOGENOM" id="CLU_033861_0_0_11"/>
<dbReference type="OrthoDB" id="9807458at2"/>
<dbReference type="UniPathway" id="UPA00159">
    <property type="reaction ID" value="UER00275"/>
</dbReference>
<dbReference type="Proteomes" id="UP000000754">
    <property type="component" value="Chromosome"/>
</dbReference>
<dbReference type="GO" id="GO:0005737">
    <property type="term" value="C:cytoplasm"/>
    <property type="evidence" value="ECO:0007669"/>
    <property type="project" value="UniProtKB-SubCell"/>
</dbReference>
<dbReference type="GO" id="GO:0005524">
    <property type="term" value="F:ATP binding"/>
    <property type="evidence" value="ECO:0007669"/>
    <property type="project" value="UniProtKB-KW"/>
</dbReference>
<dbReference type="GO" id="GO:0033862">
    <property type="term" value="F:UMP kinase activity"/>
    <property type="evidence" value="ECO:0007669"/>
    <property type="project" value="UniProtKB-EC"/>
</dbReference>
<dbReference type="GO" id="GO:0044210">
    <property type="term" value="P:'de novo' CTP biosynthetic process"/>
    <property type="evidence" value="ECO:0007669"/>
    <property type="project" value="UniProtKB-UniRule"/>
</dbReference>
<dbReference type="GO" id="GO:0006225">
    <property type="term" value="P:UDP biosynthetic process"/>
    <property type="evidence" value="ECO:0007669"/>
    <property type="project" value="TreeGrafter"/>
</dbReference>
<dbReference type="CDD" id="cd04254">
    <property type="entry name" value="AAK_UMPK-PyrH-Ec"/>
    <property type="match status" value="1"/>
</dbReference>
<dbReference type="FunFam" id="3.40.1160.10:FF:000001">
    <property type="entry name" value="Uridylate kinase"/>
    <property type="match status" value="1"/>
</dbReference>
<dbReference type="Gene3D" id="3.40.1160.10">
    <property type="entry name" value="Acetylglutamate kinase-like"/>
    <property type="match status" value="1"/>
</dbReference>
<dbReference type="HAMAP" id="MF_01220_B">
    <property type="entry name" value="PyrH_B"/>
    <property type="match status" value="1"/>
</dbReference>
<dbReference type="InterPro" id="IPR036393">
    <property type="entry name" value="AceGlu_kinase-like_sf"/>
</dbReference>
<dbReference type="InterPro" id="IPR001048">
    <property type="entry name" value="Asp/Glu/Uridylate_kinase"/>
</dbReference>
<dbReference type="InterPro" id="IPR011817">
    <property type="entry name" value="Uridylate_kinase"/>
</dbReference>
<dbReference type="InterPro" id="IPR015963">
    <property type="entry name" value="Uridylate_kinase_bac"/>
</dbReference>
<dbReference type="NCBIfam" id="TIGR02075">
    <property type="entry name" value="pyrH_bact"/>
    <property type="match status" value="1"/>
</dbReference>
<dbReference type="PANTHER" id="PTHR42833">
    <property type="entry name" value="URIDYLATE KINASE"/>
    <property type="match status" value="1"/>
</dbReference>
<dbReference type="PANTHER" id="PTHR42833:SF4">
    <property type="entry name" value="URIDYLATE KINASE PUMPKIN, CHLOROPLASTIC"/>
    <property type="match status" value="1"/>
</dbReference>
<dbReference type="Pfam" id="PF00696">
    <property type="entry name" value="AA_kinase"/>
    <property type="match status" value="1"/>
</dbReference>
<dbReference type="PIRSF" id="PIRSF005650">
    <property type="entry name" value="Uridylate_kin"/>
    <property type="match status" value="1"/>
</dbReference>
<dbReference type="SUPFAM" id="SSF53633">
    <property type="entry name" value="Carbamate kinase-like"/>
    <property type="match status" value="1"/>
</dbReference>
<proteinExistence type="inferred from homology"/>